<name>GREA_XYLFT</name>
<dbReference type="EMBL" id="AE009442">
    <property type="protein sequence ID" value="AAO28280.1"/>
    <property type="molecule type" value="Genomic_DNA"/>
</dbReference>
<dbReference type="SMR" id="Q87EB7"/>
<dbReference type="KEGG" id="xft:PD_0400"/>
<dbReference type="HOGENOM" id="CLU_101379_2_0_6"/>
<dbReference type="Proteomes" id="UP000002516">
    <property type="component" value="Chromosome"/>
</dbReference>
<dbReference type="GO" id="GO:0003677">
    <property type="term" value="F:DNA binding"/>
    <property type="evidence" value="ECO:0007669"/>
    <property type="project" value="UniProtKB-UniRule"/>
</dbReference>
<dbReference type="GO" id="GO:0070063">
    <property type="term" value="F:RNA polymerase binding"/>
    <property type="evidence" value="ECO:0007669"/>
    <property type="project" value="InterPro"/>
</dbReference>
<dbReference type="GO" id="GO:0006354">
    <property type="term" value="P:DNA-templated transcription elongation"/>
    <property type="evidence" value="ECO:0007669"/>
    <property type="project" value="TreeGrafter"/>
</dbReference>
<dbReference type="GO" id="GO:0032784">
    <property type="term" value="P:regulation of DNA-templated transcription elongation"/>
    <property type="evidence" value="ECO:0007669"/>
    <property type="project" value="UniProtKB-UniRule"/>
</dbReference>
<dbReference type="FunFam" id="1.10.287.180:FF:000001">
    <property type="entry name" value="Transcription elongation factor GreA"/>
    <property type="match status" value="1"/>
</dbReference>
<dbReference type="FunFam" id="3.10.50.30:FF:000001">
    <property type="entry name" value="Transcription elongation factor GreA"/>
    <property type="match status" value="1"/>
</dbReference>
<dbReference type="Gene3D" id="3.10.50.30">
    <property type="entry name" value="Transcription elongation factor, GreA/GreB, C-terminal domain"/>
    <property type="match status" value="1"/>
</dbReference>
<dbReference type="Gene3D" id="1.10.287.180">
    <property type="entry name" value="Transcription elongation factor, GreA/GreB, N-terminal domain"/>
    <property type="match status" value="1"/>
</dbReference>
<dbReference type="HAMAP" id="MF_00105">
    <property type="entry name" value="GreA_GreB"/>
    <property type="match status" value="1"/>
</dbReference>
<dbReference type="InterPro" id="IPR036953">
    <property type="entry name" value="GreA/GreB_C_sf"/>
</dbReference>
<dbReference type="InterPro" id="IPR018151">
    <property type="entry name" value="TF_GreA/GreB_CS"/>
</dbReference>
<dbReference type="InterPro" id="IPR006359">
    <property type="entry name" value="Tscrpt_elong_fac_GreA"/>
</dbReference>
<dbReference type="InterPro" id="IPR028624">
    <property type="entry name" value="Tscrpt_elong_fac_GreA/B"/>
</dbReference>
<dbReference type="InterPro" id="IPR001437">
    <property type="entry name" value="Tscrpt_elong_fac_GreA/B_C"/>
</dbReference>
<dbReference type="InterPro" id="IPR023459">
    <property type="entry name" value="Tscrpt_elong_fac_GreA/B_fam"/>
</dbReference>
<dbReference type="InterPro" id="IPR022691">
    <property type="entry name" value="Tscrpt_elong_fac_GreA/B_N"/>
</dbReference>
<dbReference type="InterPro" id="IPR036805">
    <property type="entry name" value="Tscrpt_elong_fac_GreA/B_N_sf"/>
</dbReference>
<dbReference type="NCBIfam" id="TIGR01462">
    <property type="entry name" value="greA"/>
    <property type="match status" value="1"/>
</dbReference>
<dbReference type="NCBIfam" id="NF001261">
    <property type="entry name" value="PRK00226.1-2"/>
    <property type="match status" value="1"/>
</dbReference>
<dbReference type="NCBIfam" id="NF001263">
    <property type="entry name" value="PRK00226.1-4"/>
    <property type="match status" value="1"/>
</dbReference>
<dbReference type="NCBIfam" id="NF001264">
    <property type="entry name" value="PRK00226.1-5"/>
    <property type="match status" value="1"/>
</dbReference>
<dbReference type="PANTHER" id="PTHR30437">
    <property type="entry name" value="TRANSCRIPTION ELONGATION FACTOR GREA"/>
    <property type="match status" value="1"/>
</dbReference>
<dbReference type="PANTHER" id="PTHR30437:SF4">
    <property type="entry name" value="TRANSCRIPTION ELONGATION FACTOR GREA"/>
    <property type="match status" value="1"/>
</dbReference>
<dbReference type="Pfam" id="PF01272">
    <property type="entry name" value="GreA_GreB"/>
    <property type="match status" value="1"/>
</dbReference>
<dbReference type="Pfam" id="PF03449">
    <property type="entry name" value="GreA_GreB_N"/>
    <property type="match status" value="1"/>
</dbReference>
<dbReference type="PIRSF" id="PIRSF006092">
    <property type="entry name" value="GreA_GreB"/>
    <property type="match status" value="1"/>
</dbReference>
<dbReference type="SUPFAM" id="SSF54534">
    <property type="entry name" value="FKBP-like"/>
    <property type="match status" value="1"/>
</dbReference>
<dbReference type="SUPFAM" id="SSF46557">
    <property type="entry name" value="GreA transcript cleavage protein, N-terminal domain"/>
    <property type="match status" value="1"/>
</dbReference>
<dbReference type="PROSITE" id="PS00829">
    <property type="entry name" value="GREAB_1"/>
    <property type="match status" value="1"/>
</dbReference>
<comment type="function">
    <text evidence="1">Necessary for efficient RNA polymerase transcription elongation past template-encoded arresting sites. The arresting sites in DNA have the property of trapping a certain fraction of elongating RNA polymerases that pass through, resulting in locked ternary complexes. Cleavage of the nascent transcript by cleavage factors such as GreA or GreB allows the resumption of elongation from the new 3'terminus. GreA releases sequences of 2 to 3 nucleotides.</text>
</comment>
<comment type="similarity">
    <text evidence="1">Belongs to the GreA/GreB family.</text>
</comment>
<proteinExistence type="inferred from homology"/>
<keyword id="KW-0175">Coiled coil</keyword>
<keyword id="KW-0238">DNA-binding</keyword>
<keyword id="KW-1185">Reference proteome</keyword>
<keyword id="KW-0804">Transcription</keyword>
<keyword id="KW-0805">Transcription regulation</keyword>
<evidence type="ECO:0000255" key="1">
    <source>
        <dbReference type="HAMAP-Rule" id="MF_00105"/>
    </source>
</evidence>
<organism>
    <name type="scientific">Xylella fastidiosa (strain Temecula1 / ATCC 700964)</name>
    <dbReference type="NCBI Taxonomy" id="183190"/>
    <lineage>
        <taxon>Bacteria</taxon>
        <taxon>Pseudomonadati</taxon>
        <taxon>Pseudomonadota</taxon>
        <taxon>Gammaproteobacteria</taxon>
        <taxon>Lysobacterales</taxon>
        <taxon>Lysobacteraceae</taxon>
        <taxon>Xylella</taxon>
    </lineage>
</organism>
<protein>
    <recommendedName>
        <fullName evidence="1">Transcription elongation factor GreA</fullName>
    </recommendedName>
    <alternativeName>
        <fullName evidence="1">Transcript cleavage factor GreA</fullName>
    </alternativeName>
</protein>
<sequence length="158" mass="17344">MRAPMTLKGVRRLRDELEHLKSVKRPEIINAIAEARAHGDLKENAEYHAAREQQSFIEGRIKQLEGELSHAEVIDVAKLNAGTKIVFGATVTLADLGTDEESRYQIVGDLEADIKQGLVAISSPVARALIGKQEGDTIVIEAPAGRREYEVVAVEYIS</sequence>
<gene>
    <name evidence="1" type="primary">greA</name>
    <name type="ordered locus">PD_0400</name>
</gene>
<reference key="1">
    <citation type="journal article" date="2003" name="J. Bacteriol.">
        <title>Comparative analyses of the complete genome sequences of Pierce's disease and citrus variegated chlorosis strains of Xylella fastidiosa.</title>
        <authorList>
            <person name="Van Sluys M.A."/>
            <person name="de Oliveira M.C."/>
            <person name="Monteiro-Vitorello C.B."/>
            <person name="Miyaki C.Y."/>
            <person name="Furlan L.R."/>
            <person name="Camargo L.E.A."/>
            <person name="da Silva A.C.R."/>
            <person name="Moon D.H."/>
            <person name="Takita M.A."/>
            <person name="Lemos E.G.M."/>
            <person name="Machado M.A."/>
            <person name="Ferro M.I.T."/>
            <person name="da Silva F.R."/>
            <person name="Goldman M.H.S."/>
            <person name="Goldman G.H."/>
            <person name="Lemos M.V.F."/>
            <person name="El-Dorry H."/>
            <person name="Tsai S.M."/>
            <person name="Carrer H."/>
            <person name="Carraro D.M."/>
            <person name="de Oliveira R.C."/>
            <person name="Nunes L.R."/>
            <person name="Siqueira W.J."/>
            <person name="Coutinho L.L."/>
            <person name="Kimura E.T."/>
            <person name="Ferro E.S."/>
            <person name="Harakava R."/>
            <person name="Kuramae E.E."/>
            <person name="Marino C.L."/>
            <person name="Giglioti E."/>
            <person name="Abreu I.L."/>
            <person name="Alves L.M.C."/>
            <person name="do Amaral A.M."/>
            <person name="Baia G.S."/>
            <person name="Blanco S.R."/>
            <person name="Brito M.S."/>
            <person name="Cannavan F.S."/>
            <person name="Celestino A.V."/>
            <person name="da Cunha A.F."/>
            <person name="Fenille R.C."/>
            <person name="Ferro J.A."/>
            <person name="Formighieri E.F."/>
            <person name="Kishi L.T."/>
            <person name="Leoni S.G."/>
            <person name="Oliveira A.R."/>
            <person name="Rosa V.E. Jr."/>
            <person name="Sassaki F.T."/>
            <person name="Sena J.A.D."/>
            <person name="de Souza A.A."/>
            <person name="Truffi D."/>
            <person name="Tsukumo F."/>
            <person name="Yanai G.M."/>
            <person name="Zaros L.G."/>
            <person name="Civerolo E.L."/>
            <person name="Simpson A.J.G."/>
            <person name="Almeida N.F. Jr."/>
            <person name="Setubal J.C."/>
            <person name="Kitajima J.P."/>
        </authorList>
    </citation>
    <scope>NUCLEOTIDE SEQUENCE [LARGE SCALE GENOMIC DNA]</scope>
    <source>
        <strain>Temecula1 / ATCC 700964</strain>
    </source>
</reference>
<accession>Q87EB7</accession>
<feature type="chain" id="PRO_0000177002" description="Transcription elongation factor GreA">
    <location>
        <begin position="1"/>
        <end position="158"/>
    </location>
</feature>
<feature type="coiled-coil region" evidence="1">
    <location>
        <begin position="45"/>
        <end position="72"/>
    </location>
</feature>